<sequence length="56" mass="6082">MSGSGAMLLGLLILVAMATSLDTREICWHQSECDDPNEWCCIMGTSYGSCQPVCRP</sequence>
<organism>
    <name type="scientific">Californiconus californicus</name>
    <name type="common">California cone</name>
    <name type="synonym">Conus californicus</name>
    <dbReference type="NCBI Taxonomy" id="1736779"/>
    <lineage>
        <taxon>Eukaryota</taxon>
        <taxon>Metazoa</taxon>
        <taxon>Spiralia</taxon>
        <taxon>Lophotrochozoa</taxon>
        <taxon>Mollusca</taxon>
        <taxon>Gastropoda</taxon>
        <taxon>Caenogastropoda</taxon>
        <taxon>Neogastropoda</taxon>
        <taxon>Conoidea</taxon>
        <taxon>Conidae</taxon>
        <taxon>Californiconus</taxon>
    </lineage>
</organism>
<accession>P0DUA5</accession>
<evidence type="ECO:0000255" key="1"/>
<evidence type="ECO:0000303" key="2">
    <source>
    </source>
</evidence>
<evidence type="ECO:0000305" key="3"/>
<evidence type="ECO:0000305" key="4">
    <source>
    </source>
</evidence>
<keyword id="KW-1015">Disulfide bond</keyword>
<keyword id="KW-0960">Knottin</keyword>
<keyword id="KW-0528">Neurotoxin</keyword>
<keyword id="KW-0964">Secreted</keyword>
<keyword id="KW-0732">Signal</keyword>
<keyword id="KW-0800">Toxin</keyword>
<dbReference type="GO" id="GO:0005576">
    <property type="term" value="C:extracellular region"/>
    <property type="evidence" value="ECO:0007669"/>
    <property type="project" value="UniProtKB-SubCell"/>
</dbReference>
<dbReference type="GO" id="GO:0090729">
    <property type="term" value="F:toxin activity"/>
    <property type="evidence" value="ECO:0007669"/>
    <property type="project" value="UniProtKB-KW"/>
</dbReference>
<comment type="function">
    <text evidence="3">Probable neurotoxin.</text>
</comment>
<comment type="subcellular location">
    <subcellularLocation>
        <location evidence="4">Secreted</location>
    </subcellularLocation>
</comment>
<comment type="tissue specificity">
    <text evidence="4">Expressed by the venom duct.</text>
</comment>
<comment type="domain">
    <text evidence="3">The cysteine framework is VI/VII (C-C-CC-C-C).</text>
</comment>
<comment type="domain">
    <text evidence="3">The presence of a 'disulfide through disulfide knot' structurally defines this protein as a knottin.</text>
</comment>
<proteinExistence type="inferred from homology"/>
<name>C61C_CONCL</name>
<feature type="signal peptide" evidence="1">
    <location>
        <begin position="1"/>
        <end position="23"/>
    </location>
</feature>
<feature type="chain" id="PRO_0000450987" description="Conotoxin Cal6.41c" evidence="3">
    <location>
        <begin position="24"/>
        <end position="56"/>
    </location>
</feature>
<feature type="disulfide bond" evidence="3">
    <location>
        <begin position="27"/>
        <end position="41"/>
    </location>
</feature>
<feature type="disulfide bond" evidence="3">
    <location>
        <begin position="33"/>
        <end position="50"/>
    </location>
</feature>
<feature type="disulfide bond" evidence="3">
    <location>
        <begin position="40"/>
        <end position="54"/>
    </location>
</feature>
<reference key="1">
    <citation type="journal article" date="2019" name="Toxins">
        <title>The diversified O-superfamily in Californiconus californicus presents a conotoxin with antimycobacterial activity.</title>
        <authorList>
            <person name="Bernaldez-Sarabia J."/>
            <person name="Figueroa-Montiel A."/>
            <person name="Duenas S."/>
            <person name="Cervantes-Luevano K."/>
            <person name="Beltran J.A."/>
            <person name="Ortiz E."/>
            <person name="Jimenez S."/>
            <person name="Possani L.D."/>
            <person name="Paniagua-Solis J.F."/>
            <person name="Gonzalez-Canudas J."/>
            <person name="Licea-Navarro A."/>
        </authorList>
    </citation>
    <scope>NUCLEOTIDE SEQUENCE [MRNA]</scope>
    <source>
        <tissue>Venom duct</tissue>
    </source>
</reference>
<protein>
    <recommendedName>
        <fullName evidence="3">Conotoxin Cal6.41c</fullName>
    </recommendedName>
    <alternativeName>
        <fullName evidence="2">O3_cal6.1c</fullName>
    </alternativeName>
</protein>